<reference key="1">
    <citation type="journal article" date="1996" name="J. Bacteriol.">
        <title>Isolation of an ftsZ homolog from the archaebacterium Halobacterium salinarium: implications for the evolution of FtsZ and tubulin.</title>
        <authorList>
            <person name="Margolin W."/>
            <person name="Wang R."/>
            <person name="Kumar M."/>
        </authorList>
    </citation>
    <scope>NUCLEOTIDE SEQUENCE [GENOMIC DNA]</scope>
    <scope>FUNCTION</scope>
    <source>
        <strain>R1 / S9 / Pho81</strain>
    </source>
</reference>
<reference key="2">
    <citation type="journal article" date="2008" name="Genomics">
        <title>Evolution in the laboratory: the genome of Halobacterium salinarum strain R1 compared to that of strain NRC-1.</title>
        <authorList>
            <person name="Pfeiffer F."/>
            <person name="Schuster S.C."/>
            <person name="Broicher A."/>
            <person name="Falb M."/>
            <person name="Palm P."/>
            <person name="Rodewald K."/>
            <person name="Ruepp A."/>
            <person name="Soppa J."/>
            <person name="Tittor J."/>
            <person name="Oesterhelt D."/>
        </authorList>
    </citation>
    <scope>NUCLEOTIDE SEQUENCE [LARGE SCALE GENOMIC DNA]</scope>
    <source>
        <strain>ATCC 29341 / DSM 671 / R1</strain>
    </source>
</reference>
<name>FTSZ2_HALS3</name>
<comment type="function">
    <text evidence="1 3">Essential cell division protein that forms a contractile ring structure (Z ring) at the future cell division site. The regulation of the ring assembly controls the timing and the location of cell division. One of the functions of the FtsZ ring is to recruit other cell division proteins to the septum to produce a new cell wall between the dividing cells. Binds GTP and shows GTPase activity. Overexpression causes significant changes in cell morphology (PubMed:8631708).</text>
</comment>
<comment type="subunit">
    <text evidence="1">Homodimer. Polymerizes to form a dynamic ring structure in a strictly GTP-dependent manner. Interacts directly with several other division proteins.</text>
</comment>
<comment type="subcellular location">
    <subcellularLocation>
        <location evidence="1">Cytoplasm</location>
    </subcellularLocation>
    <text evidence="1">Assembles at midcell at the inner surface of the cytoplasmic membrane.</text>
</comment>
<comment type="similarity">
    <text evidence="1">Belongs to the FtsZ family.</text>
</comment>
<comment type="sequence caution" evidence="4">
    <conflict type="erroneous initiation">
        <sequence resource="EMBL-CDS" id="AAB06191"/>
    </conflict>
    <text>Truncated N-terminus.</text>
</comment>
<keyword id="KW-0131">Cell cycle</keyword>
<keyword id="KW-0132">Cell division</keyword>
<keyword id="KW-0963">Cytoplasm</keyword>
<keyword id="KW-0342">GTP-binding</keyword>
<keyword id="KW-0547">Nucleotide-binding</keyword>
<keyword id="KW-0717">Septation</keyword>
<protein>
    <recommendedName>
        <fullName evidence="1">Cell division protein FtsZ 2</fullName>
    </recommendedName>
</protein>
<organism>
    <name type="scientific">Halobacterium salinarum (strain ATCC 29341 / DSM 671 / R1)</name>
    <dbReference type="NCBI Taxonomy" id="478009"/>
    <lineage>
        <taxon>Archaea</taxon>
        <taxon>Methanobacteriati</taxon>
        <taxon>Methanobacteriota</taxon>
        <taxon>Stenosarchaea group</taxon>
        <taxon>Halobacteria</taxon>
        <taxon>Halobacteriales</taxon>
        <taxon>Halobacteriaceae</taxon>
        <taxon>Halobacterium</taxon>
        <taxon>Halobacterium salinarum NRC-34001</taxon>
    </lineage>
</organism>
<dbReference type="EMBL" id="AM774415">
    <property type="protein sequence ID" value="CAP13063.1"/>
    <property type="molecule type" value="Genomic_DNA"/>
</dbReference>
<dbReference type="EMBL" id="U32860">
    <property type="protein sequence ID" value="AAB06191.1"/>
    <property type="status" value="ALT_INIT"/>
    <property type="molecule type" value="Genomic_DNA"/>
</dbReference>
<dbReference type="SMR" id="B0R2V3"/>
<dbReference type="EnsemblBacteria" id="CAP13063">
    <property type="protein sequence ID" value="CAP13063"/>
    <property type="gene ID" value="OE_1319R"/>
</dbReference>
<dbReference type="KEGG" id="hsl:OE_1319R"/>
<dbReference type="HOGENOM" id="CLU_024865_0_1_2"/>
<dbReference type="PhylomeDB" id="B0R2V3"/>
<dbReference type="Proteomes" id="UP000001321">
    <property type="component" value="Chromosome"/>
</dbReference>
<dbReference type="GO" id="GO:0032153">
    <property type="term" value="C:cell division site"/>
    <property type="evidence" value="ECO:0007669"/>
    <property type="project" value="UniProtKB-UniRule"/>
</dbReference>
<dbReference type="GO" id="GO:0005737">
    <property type="term" value="C:cytoplasm"/>
    <property type="evidence" value="ECO:0007669"/>
    <property type="project" value="UniProtKB-SubCell"/>
</dbReference>
<dbReference type="GO" id="GO:0005525">
    <property type="term" value="F:GTP binding"/>
    <property type="evidence" value="ECO:0007669"/>
    <property type="project" value="UniProtKB-UniRule"/>
</dbReference>
<dbReference type="GO" id="GO:0003924">
    <property type="term" value="F:GTPase activity"/>
    <property type="evidence" value="ECO:0007669"/>
    <property type="project" value="UniProtKB-UniRule"/>
</dbReference>
<dbReference type="GO" id="GO:0043093">
    <property type="term" value="P:FtsZ-dependent cytokinesis"/>
    <property type="evidence" value="ECO:0007669"/>
    <property type="project" value="UniProtKB-UniRule"/>
</dbReference>
<dbReference type="GO" id="GO:0051258">
    <property type="term" value="P:protein polymerization"/>
    <property type="evidence" value="ECO:0007669"/>
    <property type="project" value="UniProtKB-UniRule"/>
</dbReference>
<dbReference type="CDD" id="cd02201">
    <property type="entry name" value="FtsZ_type1"/>
    <property type="match status" value="1"/>
</dbReference>
<dbReference type="FunFam" id="3.30.1330.20:FF:000008">
    <property type="entry name" value="Cell division protein FtsZ"/>
    <property type="match status" value="1"/>
</dbReference>
<dbReference type="FunFam" id="3.40.50.1440:FF:000014">
    <property type="entry name" value="Cell division protein FtsZ"/>
    <property type="match status" value="1"/>
</dbReference>
<dbReference type="Gene3D" id="3.30.1330.20">
    <property type="entry name" value="Tubulin/FtsZ, C-terminal domain"/>
    <property type="match status" value="1"/>
</dbReference>
<dbReference type="Gene3D" id="3.40.50.1440">
    <property type="entry name" value="Tubulin/FtsZ, GTPase domain"/>
    <property type="match status" value="1"/>
</dbReference>
<dbReference type="HAMAP" id="MF_00909">
    <property type="entry name" value="FtsZ"/>
    <property type="match status" value="1"/>
</dbReference>
<dbReference type="InterPro" id="IPR000158">
    <property type="entry name" value="Cell_div_FtsZ"/>
</dbReference>
<dbReference type="InterPro" id="IPR020805">
    <property type="entry name" value="Cell_div_FtsZ_CS"/>
</dbReference>
<dbReference type="InterPro" id="IPR045061">
    <property type="entry name" value="FtsZ/CetZ"/>
</dbReference>
<dbReference type="InterPro" id="IPR024757">
    <property type="entry name" value="FtsZ_C"/>
</dbReference>
<dbReference type="InterPro" id="IPR008280">
    <property type="entry name" value="Tub_FtsZ_C"/>
</dbReference>
<dbReference type="InterPro" id="IPR037103">
    <property type="entry name" value="Tubulin/FtsZ-like_C"/>
</dbReference>
<dbReference type="InterPro" id="IPR018316">
    <property type="entry name" value="Tubulin/FtsZ_2-layer-sand-dom"/>
</dbReference>
<dbReference type="InterPro" id="IPR036525">
    <property type="entry name" value="Tubulin/FtsZ_GTPase_sf"/>
</dbReference>
<dbReference type="InterPro" id="IPR003008">
    <property type="entry name" value="Tubulin_FtsZ_GTPase"/>
</dbReference>
<dbReference type="NCBIfam" id="TIGR00065">
    <property type="entry name" value="ftsZ"/>
    <property type="match status" value="1"/>
</dbReference>
<dbReference type="PANTHER" id="PTHR30314:SF9">
    <property type="entry name" value="CELL DIVISION PROTEIN FTSZ 2"/>
    <property type="match status" value="1"/>
</dbReference>
<dbReference type="PANTHER" id="PTHR30314">
    <property type="entry name" value="CELL DIVISION PROTEIN FTSZ-RELATED"/>
    <property type="match status" value="1"/>
</dbReference>
<dbReference type="Pfam" id="PF12327">
    <property type="entry name" value="FtsZ_C"/>
    <property type="match status" value="1"/>
</dbReference>
<dbReference type="Pfam" id="PF00091">
    <property type="entry name" value="Tubulin"/>
    <property type="match status" value="1"/>
</dbReference>
<dbReference type="PRINTS" id="PR00423">
    <property type="entry name" value="CELLDVISFTSZ"/>
</dbReference>
<dbReference type="SMART" id="SM00864">
    <property type="entry name" value="Tubulin"/>
    <property type="match status" value="1"/>
</dbReference>
<dbReference type="SMART" id="SM00865">
    <property type="entry name" value="Tubulin_C"/>
    <property type="match status" value="1"/>
</dbReference>
<dbReference type="SUPFAM" id="SSF55307">
    <property type="entry name" value="Tubulin C-terminal domain-like"/>
    <property type="match status" value="1"/>
</dbReference>
<dbReference type="SUPFAM" id="SSF52490">
    <property type="entry name" value="Tubulin nucleotide-binding domain-like"/>
    <property type="match status" value="1"/>
</dbReference>
<dbReference type="PROSITE" id="PS01134">
    <property type="entry name" value="FTSZ_1"/>
    <property type="match status" value="1"/>
</dbReference>
<dbReference type="PROSITE" id="PS01135">
    <property type="entry name" value="FTSZ_2"/>
    <property type="match status" value="1"/>
</dbReference>
<gene>
    <name evidence="1" type="primary">ftsZ2</name>
    <name type="ordered locus">OE_1319R</name>
</gene>
<accession>B0R2V3</accession>
<accession>Q48290</accession>
<accession>Q9HSK0</accession>
<sequence>MQDIVQDALDNAEAEQREMDGDGDGDEFGDPRIVIVGCGGAGNNTVNRLYNIGVEGADTVAINTDKQHLKMIKADTKILVGKSLTNGLGAGGDPSMGERATEMAQGTIKEVLGDADLVFVTAGMGGGTGTGAAPVVSKIAKEQGAIVVGMVSTPFNVERARTVKAEEGLEKLREKADSIIVLDNNRLLDYVPNLPIGKAFSVMDQIIAETVKGISETITQPSLINLDYADMTAIMNQGGVAVMLVGETQDKNKTNEVVKDAMNHPLLDVDYRGASGGLVHITGGPDLTLKEAEGIADNITERLDASANVIWGARIQESYKGKVRVMAIMTGVQSAQVLGPSTQKQADKSRRELQDVDSKQRAADDAGAGGFGGAHSDGGQDEVEQENGLDVIR</sequence>
<feature type="chain" id="PRO_0000414241" description="Cell division protein FtsZ 2">
    <location>
        <begin position="1"/>
        <end position="393"/>
    </location>
</feature>
<feature type="region of interest" description="Disordered" evidence="2">
    <location>
        <begin position="1"/>
        <end position="28"/>
    </location>
</feature>
<feature type="region of interest" description="Disordered" evidence="2">
    <location>
        <begin position="339"/>
        <end position="393"/>
    </location>
</feature>
<feature type="compositionally biased region" description="Basic and acidic residues" evidence="2">
    <location>
        <begin position="345"/>
        <end position="364"/>
    </location>
</feature>
<feature type="compositionally biased region" description="Gly residues" evidence="2">
    <location>
        <begin position="367"/>
        <end position="376"/>
    </location>
</feature>
<feature type="binding site" evidence="1">
    <location>
        <begin position="40"/>
        <end position="44"/>
    </location>
    <ligand>
        <name>GTP</name>
        <dbReference type="ChEBI" id="CHEBI:37565"/>
    </ligand>
</feature>
<feature type="binding site" evidence="1">
    <location>
        <begin position="127"/>
        <end position="129"/>
    </location>
    <ligand>
        <name>GTP</name>
        <dbReference type="ChEBI" id="CHEBI:37565"/>
    </ligand>
</feature>
<feature type="binding site" evidence="1">
    <location>
        <position position="158"/>
    </location>
    <ligand>
        <name>GTP</name>
        <dbReference type="ChEBI" id="CHEBI:37565"/>
    </ligand>
</feature>
<feature type="binding site" evidence="1">
    <location>
        <position position="161"/>
    </location>
    <ligand>
        <name>GTP</name>
        <dbReference type="ChEBI" id="CHEBI:37565"/>
    </ligand>
</feature>
<feature type="binding site" evidence="1">
    <location>
        <position position="204"/>
    </location>
    <ligand>
        <name>GTP</name>
        <dbReference type="ChEBI" id="CHEBI:37565"/>
    </ligand>
</feature>
<evidence type="ECO:0000255" key="1">
    <source>
        <dbReference type="HAMAP-Rule" id="MF_00909"/>
    </source>
</evidence>
<evidence type="ECO:0000256" key="2">
    <source>
        <dbReference type="SAM" id="MobiDB-lite"/>
    </source>
</evidence>
<evidence type="ECO:0000269" key="3">
    <source>
    </source>
</evidence>
<evidence type="ECO:0000305" key="4"/>
<proteinExistence type="inferred from homology"/>